<protein>
    <recommendedName>
        <fullName evidence="1">Urease accessory protein UreF</fullName>
    </recommendedName>
</protein>
<feature type="chain" id="PRO_0000067656" description="Urease accessory protein UreF">
    <location>
        <begin position="1"/>
        <end position="235"/>
    </location>
</feature>
<feature type="sequence conflict" description="In Ref. 1; AAA89191." evidence="2" ref="1">
    <original>G</original>
    <variation>R</variation>
    <location>
        <position position="24"/>
    </location>
</feature>
<feature type="sequence conflict" description="In Ref. 1; AAA89191." evidence="2" ref="1">
    <original>MINFQGLARETREG</original>
    <variation>SDKLSRFSKRDSLKV</variation>
    <location>
        <begin position="88"/>
        <end position="101"/>
    </location>
</feature>
<feature type="sequence conflict" description="In Ref. 1; AAA89191." evidence="2" ref="1">
    <original>DFKTDFCKNIPGLEIAQMEHEDTPVRLFMS</original>
    <variation>ILKQIFAKIYQALKLPNGTLRHTCSIVHVIIKVLVKHYINHKNTILIFLENLKKKEN</variation>
    <location>
        <begin position="206"/>
        <end position="235"/>
    </location>
</feature>
<gene>
    <name evidence="1" type="primary">ureF</name>
    <name type="ordered locus">UU430</name>
</gene>
<organism>
    <name type="scientific">Ureaplasma parvum serovar 3 (strain ATCC 700970)</name>
    <dbReference type="NCBI Taxonomy" id="273119"/>
    <lineage>
        <taxon>Bacteria</taxon>
        <taxon>Bacillati</taxon>
        <taxon>Mycoplasmatota</taxon>
        <taxon>Mycoplasmoidales</taxon>
        <taxon>Mycoplasmoidaceae</taxon>
        <taxon>Ureaplasma</taxon>
    </lineage>
</organism>
<accession>Q56560</accession>
<accession>Q9PQ58</accession>
<evidence type="ECO:0000255" key="1">
    <source>
        <dbReference type="HAMAP-Rule" id="MF_01385"/>
    </source>
</evidence>
<evidence type="ECO:0000305" key="2"/>
<proteinExistence type="inferred from homology"/>
<name>UREF_UREPA</name>
<sequence length="235" mass="27147">MTLNSDYLNLLDLMQITNANFPIGTFSHSFGVETYIRKDIVFDGESLIKALLLYMNEQLLHGDLLAIYQIFKLLPKQKINAIWEIDQMINFQGLARETREGQRRIGQQMVKIYNELFNCELLVEYAERIKNKKSYGNPAVAFALLAMHLKIDLKTALYTHLYSTVAALTQNCVRAIPLGQVKGQKIIYQLKHVYFDDIVNKVFTLDFKTDFCKNIPGLEIAQMEHEDTPVRLFMS</sequence>
<reference key="1">
    <citation type="journal article" date="1996" name="J. Bacteriol.">
        <title>Organization of Ureaplasma urealyticum urease gene cluster and expression in a suppressor strain of Escherichia coli.</title>
        <authorList>
            <person name="Neyrolles O."/>
            <person name="Ferris S."/>
            <person name="Behbahani N."/>
            <person name="Montagnier L."/>
            <person name="Blanchard A."/>
        </authorList>
    </citation>
    <scope>NUCLEOTIDE SEQUENCE [GENOMIC DNA]</scope>
    <source>
        <strain>ATCC 27813 / 7 / Serovar 1</strain>
    </source>
</reference>
<reference key="2">
    <citation type="journal article" date="2000" name="Nature">
        <title>The complete sequence of the mucosal pathogen Ureaplasma urealyticum.</title>
        <authorList>
            <person name="Glass J.I."/>
            <person name="Lefkowitz E.J."/>
            <person name="Glass J.S."/>
            <person name="Heiner C.R."/>
            <person name="Chen E.Y."/>
            <person name="Cassell G.H."/>
        </authorList>
    </citation>
    <scope>NUCLEOTIDE SEQUENCE [LARGE SCALE GENOMIC DNA]</scope>
    <source>
        <strain>ATCC 700970</strain>
    </source>
</reference>
<keyword id="KW-0143">Chaperone</keyword>
<keyword id="KW-0963">Cytoplasm</keyword>
<keyword id="KW-0996">Nickel insertion</keyword>
<keyword id="KW-1185">Reference proteome</keyword>
<dbReference type="EMBL" id="L40489">
    <property type="protein sequence ID" value="AAA89191.2"/>
    <property type="status" value="ALT_INIT"/>
    <property type="molecule type" value="Genomic_DNA"/>
</dbReference>
<dbReference type="EMBL" id="AF222894">
    <property type="protein sequence ID" value="AAF30842.1"/>
    <property type="status" value="ALT_INIT"/>
    <property type="molecule type" value="Genomic_DNA"/>
</dbReference>
<dbReference type="PIR" id="E82890">
    <property type="entry name" value="E82890"/>
</dbReference>
<dbReference type="RefSeq" id="WP_006689006.1">
    <property type="nucleotide sequence ID" value="NC_002162.1"/>
</dbReference>
<dbReference type="SMR" id="Q56560"/>
<dbReference type="STRING" id="273119.UU430"/>
<dbReference type="EnsemblBacteria" id="AAF30842">
    <property type="protein sequence ID" value="AAF30842"/>
    <property type="gene ID" value="UU430"/>
</dbReference>
<dbReference type="GeneID" id="29672335"/>
<dbReference type="KEGG" id="uur:UU430"/>
<dbReference type="eggNOG" id="COG0830">
    <property type="taxonomic scope" value="Bacteria"/>
</dbReference>
<dbReference type="HOGENOM" id="CLU_049215_4_2_14"/>
<dbReference type="OrthoDB" id="9798772at2"/>
<dbReference type="Proteomes" id="UP000000423">
    <property type="component" value="Chromosome"/>
</dbReference>
<dbReference type="GO" id="GO:0005737">
    <property type="term" value="C:cytoplasm"/>
    <property type="evidence" value="ECO:0007669"/>
    <property type="project" value="UniProtKB-SubCell"/>
</dbReference>
<dbReference type="GO" id="GO:0016151">
    <property type="term" value="F:nickel cation binding"/>
    <property type="evidence" value="ECO:0007669"/>
    <property type="project" value="UniProtKB-UniRule"/>
</dbReference>
<dbReference type="Gene3D" id="1.10.4190.10">
    <property type="entry name" value="Urease accessory protein UreF"/>
    <property type="match status" value="1"/>
</dbReference>
<dbReference type="HAMAP" id="MF_01385">
    <property type="entry name" value="UreF"/>
    <property type="match status" value="1"/>
</dbReference>
<dbReference type="InterPro" id="IPR002639">
    <property type="entry name" value="UreF"/>
</dbReference>
<dbReference type="InterPro" id="IPR038277">
    <property type="entry name" value="UreF_sf"/>
</dbReference>
<dbReference type="PANTHER" id="PTHR33620">
    <property type="entry name" value="UREASE ACCESSORY PROTEIN F"/>
    <property type="match status" value="1"/>
</dbReference>
<dbReference type="PANTHER" id="PTHR33620:SF1">
    <property type="entry name" value="UREASE ACCESSORY PROTEIN F"/>
    <property type="match status" value="1"/>
</dbReference>
<dbReference type="Pfam" id="PF01730">
    <property type="entry name" value="UreF"/>
    <property type="match status" value="1"/>
</dbReference>
<dbReference type="PIRSF" id="PIRSF009467">
    <property type="entry name" value="Ureas_acces_UreF"/>
    <property type="match status" value="1"/>
</dbReference>
<comment type="function">
    <text evidence="1">Required for maturation of urease via the functional incorporation of the urease nickel metallocenter.</text>
</comment>
<comment type="subunit">
    <text evidence="1">UreD, UreF and UreG form a complex that acts as a GTP-hydrolysis-dependent molecular chaperone, activating the urease apoprotein by helping to assemble the nickel containing metallocenter of UreC. The UreE protein probably delivers the nickel.</text>
</comment>
<comment type="subcellular location">
    <subcellularLocation>
        <location evidence="1">Cytoplasm</location>
    </subcellularLocation>
</comment>
<comment type="similarity">
    <text evidence="1">Belongs to the UreF family.</text>
</comment>
<comment type="sequence caution" evidence="2">
    <conflict type="erroneous initiation">
        <sequence resource="EMBL-CDS" id="AAA89191"/>
    </conflict>
</comment>
<comment type="sequence caution" evidence="2">
    <conflict type="erroneous initiation">
        <sequence resource="EMBL-CDS" id="AAF30842"/>
    </conflict>
</comment>